<dbReference type="EMBL" id="AL009126">
    <property type="protein sequence ID" value="CAB13968.1"/>
    <property type="molecule type" value="Genomic_DNA"/>
</dbReference>
<dbReference type="RefSeq" id="NP_389958.1">
    <property type="nucleotide sequence ID" value="NC_000964.3"/>
</dbReference>
<dbReference type="RefSeq" id="WP_009967504.1">
    <property type="nucleotide sequence ID" value="NZ_OZ025638.1"/>
</dbReference>
<dbReference type="SMR" id="O34937"/>
<dbReference type="FunCoup" id="O34937">
    <property type="interactions" value="7"/>
</dbReference>
<dbReference type="STRING" id="224308.BSU20760"/>
<dbReference type="PaxDb" id="224308-BSU20760"/>
<dbReference type="EnsemblBacteria" id="CAB13968">
    <property type="protein sequence ID" value="CAB13968"/>
    <property type="gene ID" value="BSU_20760"/>
</dbReference>
<dbReference type="GeneID" id="936485"/>
<dbReference type="KEGG" id="bsu:BSU20760"/>
<dbReference type="PATRIC" id="fig|224308.179.peg.2266"/>
<dbReference type="InParanoid" id="O34937"/>
<dbReference type="OrthoDB" id="2927299at2"/>
<dbReference type="BioCyc" id="BSUB:BSU20760-MONOMER"/>
<dbReference type="Proteomes" id="UP000001570">
    <property type="component" value="Chromosome"/>
</dbReference>
<accession>O34937</accession>
<protein>
    <recommendedName>
        <fullName>SPbeta prophage-derived uncharacterized protein YopU</fullName>
    </recommendedName>
</protein>
<keyword id="KW-1185">Reference proteome</keyword>
<sequence>MNIFVDQDNYKEVSLKLTKKLLTSEHYQFLLCFKGEKLDITISVTPQSLVKLRDDINELIFMFSD</sequence>
<organism>
    <name type="scientific">Bacillus subtilis (strain 168)</name>
    <dbReference type="NCBI Taxonomy" id="224308"/>
    <lineage>
        <taxon>Bacteria</taxon>
        <taxon>Bacillati</taxon>
        <taxon>Bacillota</taxon>
        <taxon>Bacilli</taxon>
        <taxon>Bacillales</taxon>
        <taxon>Bacillaceae</taxon>
        <taxon>Bacillus</taxon>
    </lineage>
</organism>
<name>YOPU_BACSU</name>
<gene>
    <name type="primary">yopU</name>
    <name type="ordered locus">BSU20760</name>
</gene>
<feature type="chain" id="PRO_0000361093" description="SPbeta prophage-derived uncharacterized protein YopU">
    <location>
        <begin position="1"/>
        <end position="65"/>
    </location>
</feature>
<reference key="1">
    <citation type="journal article" date="1997" name="Nature">
        <title>The complete genome sequence of the Gram-positive bacterium Bacillus subtilis.</title>
        <authorList>
            <person name="Kunst F."/>
            <person name="Ogasawara N."/>
            <person name="Moszer I."/>
            <person name="Albertini A.M."/>
            <person name="Alloni G."/>
            <person name="Azevedo V."/>
            <person name="Bertero M.G."/>
            <person name="Bessieres P."/>
            <person name="Bolotin A."/>
            <person name="Borchert S."/>
            <person name="Borriss R."/>
            <person name="Boursier L."/>
            <person name="Brans A."/>
            <person name="Braun M."/>
            <person name="Brignell S.C."/>
            <person name="Bron S."/>
            <person name="Brouillet S."/>
            <person name="Bruschi C.V."/>
            <person name="Caldwell B."/>
            <person name="Capuano V."/>
            <person name="Carter N.M."/>
            <person name="Choi S.-K."/>
            <person name="Codani J.-J."/>
            <person name="Connerton I.F."/>
            <person name="Cummings N.J."/>
            <person name="Daniel R.A."/>
            <person name="Denizot F."/>
            <person name="Devine K.M."/>
            <person name="Duesterhoeft A."/>
            <person name="Ehrlich S.D."/>
            <person name="Emmerson P.T."/>
            <person name="Entian K.-D."/>
            <person name="Errington J."/>
            <person name="Fabret C."/>
            <person name="Ferrari E."/>
            <person name="Foulger D."/>
            <person name="Fritz C."/>
            <person name="Fujita M."/>
            <person name="Fujita Y."/>
            <person name="Fuma S."/>
            <person name="Galizzi A."/>
            <person name="Galleron N."/>
            <person name="Ghim S.-Y."/>
            <person name="Glaser P."/>
            <person name="Goffeau A."/>
            <person name="Golightly E.J."/>
            <person name="Grandi G."/>
            <person name="Guiseppi G."/>
            <person name="Guy B.J."/>
            <person name="Haga K."/>
            <person name="Haiech J."/>
            <person name="Harwood C.R."/>
            <person name="Henaut A."/>
            <person name="Hilbert H."/>
            <person name="Holsappel S."/>
            <person name="Hosono S."/>
            <person name="Hullo M.-F."/>
            <person name="Itaya M."/>
            <person name="Jones L.-M."/>
            <person name="Joris B."/>
            <person name="Karamata D."/>
            <person name="Kasahara Y."/>
            <person name="Klaerr-Blanchard M."/>
            <person name="Klein C."/>
            <person name="Kobayashi Y."/>
            <person name="Koetter P."/>
            <person name="Koningstein G."/>
            <person name="Krogh S."/>
            <person name="Kumano M."/>
            <person name="Kurita K."/>
            <person name="Lapidus A."/>
            <person name="Lardinois S."/>
            <person name="Lauber J."/>
            <person name="Lazarevic V."/>
            <person name="Lee S.-M."/>
            <person name="Levine A."/>
            <person name="Liu H."/>
            <person name="Masuda S."/>
            <person name="Mauel C."/>
            <person name="Medigue C."/>
            <person name="Medina N."/>
            <person name="Mellado R.P."/>
            <person name="Mizuno M."/>
            <person name="Moestl D."/>
            <person name="Nakai S."/>
            <person name="Noback M."/>
            <person name="Noone D."/>
            <person name="O'Reilly M."/>
            <person name="Ogawa K."/>
            <person name="Ogiwara A."/>
            <person name="Oudega B."/>
            <person name="Park S.-H."/>
            <person name="Parro V."/>
            <person name="Pohl T.M."/>
            <person name="Portetelle D."/>
            <person name="Porwollik S."/>
            <person name="Prescott A.M."/>
            <person name="Presecan E."/>
            <person name="Pujic P."/>
            <person name="Purnelle B."/>
            <person name="Rapoport G."/>
            <person name="Rey M."/>
            <person name="Reynolds S."/>
            <person name="Rieger M."/>
            <person name="Rivolta C."/>
            <person name="Rocha E."/>
            <person name="Roche B."/>
            <person name="Rose M."/>
            <person name="Sadaie Y."/>
            <person name="Sato T."/>
            <person name="Scanlan E."/>
            <person name="Schleich S."/>
            <person name="Schroeter R."/>
            <person name="Scoffone F."/>
            <person name="Sekiguchi J."/>
            <person name="Sekowska A."/>
            <person name="Seror S.J."/>
            <person name="Serror P."/>
            <person name="Shin B.-S."/>
            <person name="Soldo B."/>
            <person name="Sorokin A."/>
            <person name="Tacconi E."/>
            <person name="Takagi T."/>
            <person name="Takahashi H."/>
            <person name="Takemaru K."/>
            <person name="Takeuchi M."/>
            <person name="Tamakoshi A."/>
            <person name="Tanaka T."/>
            <person name="Terpstra P."/>
            <person name="Tognoni A."/>
            <person name="Tosato V."/>
            <person name="Uchiyama S."/>
            <person name="Vandenbol M."/>
            <person name="Vannier F."/>
            <person name="Vassarotti A."/>
            <person name="Viari A."/>
            <person name="Wambutt R."/>
            <person name="Wedler E."/>
            <person name="Wedler H."/>
            <person name="Weitzenegger T."/>
            <person name="Winters P."/>
            <person name="Wipat A."/>
            <person name="Yamamoto H."/>
            <person name="Yamane K."/>
            <person name="Yasumoto K."/>
            <person name="Yata K."/>
            <person name="Yoshida K."/>
            <person name="Yoshikawa H.-F."/>
            <person name="Zumstein E."/>
            <person name="Yoshikawa H."/>
            <person name="Danchin A."/>
        </authorList>
    </citation>
    <scope>NUCLEOTIDE SEQUENCE [LARGE SCALE GENOMIC DNA]</scope>
    <source>
        <strain>168</strain>
    </source>
</reference>
<proteinExistence type="predicted"/>